<protein>
    <recommendedName>
        <fullName evidence="1">Small ribosomal subunit protein uS7</fullName>
    </recommendedName>
    <alternativeName>
        <fullName evidence="2">30S ribosomal protein S7</fullName>
    </alternativeName>
</protein>
<organism>
    <name type="scientific">Rickettsia akari (strain Hartford)</name>
    <dbReference type="NCBI Taxonomy" id="293614"/>
    <lineage>
        <taxon>Bacteria</taxon>
        <taxon>Pseudomonadati</taxon>
        <taxon>Pseudomonadota</taxon>
        <taxon>Alphaproteobacteria</taxon>
        <taxon>Rickettsiales</taxon>
        <taxon>Rickettsiaceae</taxon>
        <taxon>Rickettsieae</taxon>
        <taxon>Rickettsia</taxon>
        <taxon>spotted fever group</taxon>
    </lineage>
</organism>
<accession>A8GM99</accession>
<reference key="1">
    <citation type="submission" date="2007-09" db="EMBL/GenBank/DDBJ databases">
        <title>Complete genome sequence of Rickettsia akari.</title>
        <authorList>
            <person name="Madan A."/>
            <person name="Fahey J."/>
            <person name="Helton E."/>
            <person name="Ketteman M."/>
            <person name="Madan A."/>
            <person name="Rodrigues S."/>
            <person name="Sanchez A."/>
            <person name="Whiting M."/>
            <person name="Dasch G."/>
            <person name="Eremeeva M."/>
        </authorList>
    </citation>
    <scope>NUCLEOTIDE SEQUENCE [LARGE SCALE GENOMIC DNA]</scope>
    <source>
        <strain>Hartford</strain>
    </source>
</reference>
<keyword id="KW-0687">Ribonucleoprotein</keyword>
<keyword id="KW-0689">Ribosomal protein</keyword>
<keyword id="KW-0694">RNA-binding</keyword>
<keyword id="KW-0699">rRNA-binding</keyword>
<keyword id="KW-0820">tRNA-binding</keyword>
<name>RS7_RICAH</name>
<sequence length="160" mass="18441">MSRRHAAEKRVILPDMKYNSILLSRFINNIMKKGKKALAEKIVYSAFNKIEKKHRVDPYQTFNNAMHNVKPHLEVTSVRVGGANYQVPTHVDERRGYALASRWIINAASKRSEKMMIDKLAEELFEASNNRGVAIKKKEDTHKMAEANKAFSHFSPKKMQ</sequence>
<comment type="function">
    <text evidence="1">One of the primary rRNA binding proteins, it binds directly to 16S rRNA where it nucleates assembly of the head domain of the 30S subunit. Is located at the subunit interface close to the decoding center, probably blocks exit of the E-site tRNA.</text>
</comment>
<comment type="subunit">
    <text evidence="1">Part of the 30S ribosomal subunit. Contacts proteins S9 and S11.</text>
</comment>
<comment type="similarity">
    <text evidence="1">Belongs to the universal ribosomal protein uS7 family.</text>
</comment>
<proteinExistence type="inferred from homology"/>
<dbReference type="EMBL" id="CP000847">
    <property type="protein sequence ID" value="ABV74524.1"/>
    <property type="molecule type" value="Genomic_DNA"/>
</dbReference>
<dbReference type="RefSeq" id="WP_012013394.1">
    <property type="nucleotide sequence ID" value="NC_009881.1"/>
</dbReference>
<dbReference type="SMR" id="A8GM99"/>
<dbReference type="STRING" id="293614.A1C_00970"/>
<dbReference type="KEGG" id="rak:A1C_00970"/>
<dbReference type="eggNOG" id="COG0049">
    <property type="taxonomic scope" value="Bacteria"/>
</dbReference>
<dbReference type="HOGENOM" id="CLU_072226_1_1_5"/>
<dbReference type="Proteomes" id="UP000006830">
    <property type="component" value="Chromosome"/>
</dbReference>
<dbReference type="GO" id="GO:0015935">
    <property type="term" value="C:small ribosomal subunit"/>
    <property type="evidence" value="ECO:0007669"/>
    <property type="project" value="InterPro"/>
</dbReference>
<dbReference type="GO" id="GO:0019843">
    <property type="term" value="F:rRNA binding"/>
    <property type="evidence" value="ECO:0007669"/>
    <property type="project" value="UniProtKB-UniRule"/>
</dbReference>
<dbReference type="GO" id="GO:0003735">
    <property type="term" value="F:structural constituent of ribosome"/>
    <property type="evidence" value="ECO:0007669"/>
    <property type="project" value="InterPro"/>
</dbReference>
<dbReference type="GO" id="GO:0000049">
    <property type="term" value="F:tRNA binding"/>
    <property type="evidence" value="ECO:0007669"/>
    <property type="project" value="UniProtKB-UniRule"/>
</dbReference>
<dbReference type="GO" id="GO:0006412">
    <property type="term" value="P:translation"/>
    <property type="evidence" value="ECO:0007669"/>
    <property type="project" value="UniProtKB-UniRule"/>
</dbReference>
<dbReference type="CDD" id="cd14869">
    <property type="entry name" value="uS7_Bacteria"/>
    <property type="match status" value="1"/>
</dbReference>
<dbReference type="FunFam" id="1.10.455.10:FF:000001">
    <property type="entry name" value="30S ribosomal protein S7"/>
    <property type="match status" value="1"/>
</dbReference>
<dbReference type="Gene3D" id="1.10.455.10">
    <property type="entry name" value="Ribosomal protein S7 domain"/>
    <property type="match status" value="1"/>
</dbReference>
<dbReference type="HAMAP" id="MF_00480_B">
    <property type="entry name" value="Ribosomal_uS7_B"/>
    <property type="match status" value="1"/>
</dbReference>
<dbReference type="InterPro" id="IPR000235">
    <property type="entry name" value="Ribosomal_uS7"/>
</dbReference>
<dbReference type="InterPro" id="IPR005717">
    <property type="entry name" value="Ribosomal_uS7_bac/org-type"/>
</dbReference>
<dbReference type="InterPro" id="IPR020606">
    <property type="entry name" value="Ribosomal_uS7_CS"/>
</dbReference>
<dbReference type="InterPro" id="IPR023798">
    <property type="entry name" value="Ribosomal_uS7_dom"/>
</dbReference>
<dbReference type="InterPro" id="IPR036823">
    <property type="entry name" value="Ribosomal_uS7_dom_sf"/>
</dbReference>
<dbReference type="NCBIfam" id="TIGR01029">
    <property type="entry name" value="rpsG_bact"/>
    <property type="match status" value="1"/>
</dbReference>
<dbReference type="PANTHER" id="PTHR11205">
    <property type="entry name" value="RIBOSOMAL PROTEIN S7"/>
    <property type="match status" value="1"/>
</dbReference>
<dbReference type="Pfam" id="PF00177">
    <property type="entry name" value="Ribosomal_S7"/>
    <property type="match status" value="1"/>
</dbReference>
<dbReference type="PIRSF" id="PIRSF002122">
    <property type="entry name" value="RPS7p_RPS7a_RPS5e_RPS7o"/>
    <property type="match status" value="1"/>
</dbReference>
<dbReference type="SUPFAM" id="SSF47973">
    <property type="entry name" value="Ribosomal protein S7"/>
    <property type="match status" value="1"/>
</dbReference>
<dbReference type="PROSITE" id="PS00052">
    <property type="entry name" value="RIBOSOMAL_S7"/>
    <property type="match status" value="1"/>
</dbReference>
<feature type="chain" id="PRO_1000014274" description="Small ribosomal subunit protein uS7">
    <location>
        <begin position="1"/>
        <end position="160"/>
    </location>
</feature>
<gene>
    <name evidence="1" type="primary">rpsG</name>
    <name type="ordered locus">A1C_00970</name>
</gene>
<evidence type="ECO:0000255" key="1">
    <source>
        <dbReference type="HAMAP-Rule" id="MF_00480"/>
    </source>
</evidence>
<evidence type="ECO:0000305" key="2"/>